<evidence type="ECO:0000250" key="1"/>
<evidence type="ECO:0000250" key="2">
    <source>
        <dbReference type="UniProtKB" id="P01579"/>
    </source>
</evidence>
<evidence type="ECO:0000250" key="3">
    <source>
        <dbReference type="UniProtKB" id="P01580"/>
    </source>
</evidence>
<evidence type="ECO:0000255" key="4"/>
<evidence type="ECO:0000305" key="5"/>
<protein>
    <recommendedName>
        <fullName>Interferon gamma</fullName>
        <shortName>IFN-gamma</shortName>
    </recommendedName>
</protein>
<gene>
    <name type="primary">IFNG</name>
</gene>
<dbReference type="EMBL" id="AJ621191">
    <property type="protein sequence ID" value="CAF18415.1"/>
    <property type="molecule type" value="mRNA"/>
</dbReference>
<dbReference type="RefSeq" id="XP_025857464.1">
    <property type="nucleotide sequence ID" value="XM_026001679.1"/>
</dbReference>
<dbReference type="SMR" id="Q25BC0"/>
<dbReference type="STRING" id="9627.ENSVVUP00000014058"/>
<dbReference type="GlyCosmos" id="Q25BC0">
    <property type="glycosylation" value="2 sites, No reported glycans"/>
</dbReference>
<dbReference type="Ensembl" id="ENSVVUT00000018435">
    <property type="protein sequence ID" value="ENSVVUP00000014058"/>
    <property type="gene ID" value="ENSVVUG00000010296"/>
</dbReference>
<dbReference type="GeneID" id="112922237"/>
<dbReference type="OMA" id="QIVSMYL"/>
<dbReference type="Proteomes" id="UP000286640">
    <property type="component" value="Unplaced"/>
</dbReference>
<dbReference type="GO" id="GO:0005615">
    <property type="term" value="C:extracellular space"/>
    <property type="evidence" value="ECO:0007669"/>
    <property type="project" value="UniProtKB-KW"/>
</dbReference>
<dbReference type="GO" id="GO:0005125">
    <property type="term" value="F:cytokine activity"/>
    <property type="evidence" value="ECO:0007669"/>
    <property type="project" value="UniProtKB-KW"/>
</dbReference>
<dbReference type="GO" id="GO:0005133">
    <property type="term" value="F:type II interferon receptor binding"/>
    <property type="evidence" value="ECO:0007669"/>
    <property type="project" value="InterPro"/>
</dbReference>
<dbReference type="GO" id="GO:0002250">
    <property type="term" value="P:adaptive immune response"/>
    <property type="evidence" value="ECO:0007669"/>
    <property type="project" value="TreeGrafter"/>
</dbReference>
<dbReference type="GO" id="GO:0048143">
    <property type="term" value="P:astrocyte activation"/>
    <property type="evidence" value="ECO:0007669"/>
    <property type="project" value="Ensembl"/>
</dbReference>
<dbReference type="GO" id="GO:0097696">
    <property type="term" value="P:cell surface receptor signaling pathway via STAT"/>
    <property type="evidence" value="ECO:0007669"/>
    <property type="project" value="Ensembl"/>
</dbReference>
<dbReference type="GO" id="GO:0051607">
    <property type="term" value="P:defense response to virus"/>
    <property type="evidence" value="ECO:0007669"/>
    <property type="project" value="UniProtKB-KW"/>
</dbReference>
<dbReference type="GO" id="GO:0097191">
    <property type="term" value="P:extrinsic apoptotic signaling pathway"/>
    <property type="evidence" value="ECO:0007669"/>
    <property type="project" value="Ensembl"/>
</dbReference>
<dbReference type="GO" id="GO:0038096">
    <property type="term" value="P:Fc-gamma receptor signaling pathway involved in phagocytosis"/>
    <property type="evidence" value="ECO:0007669"/>
    <property type="project" value="Ensembl"/>
</dbReference>
<dbReference type="GO" id="GO:0006959">
    <property type="term" value="P:humoral immune response"/>
    <property type="evidence" value="ECO:0007669"/>
    <property type="project" value="TreeGrafter"/>
</dbReference>
<dbReference type="GO" id="GO:0002281">
    <property type="term" value="P:macrophage activation involved in immune response"/>
    <property type="evidence" value="ECO:0007669"/>
    <property type="project" value="Ensembl"/>
</dbReference>
<dbReference type="GO" id="GO:0030225">
    <property type="term" value="P:macrophage differentiation"/>
    <property type="evidence" value="ECO:0007669"/>
    <property type="project" value="Ensembl"/>
</dbReference>
<dbReference type="GO" id="GO:0001774">
    <property type="term" value="P:microglial cell activation"/>
    <property type="evidence" value="ECO:0007669"/>
    <property type="project" value="Ensembl"/>
</dbReference>
<dbReference type="GO" id="GO:0045892">
    <property type="term" value="P:negative regulation of DNA-templated transcription"/>
    <property type="evidence" value="ECO:0007669"/>
    <property type="project" value="Ensembl"/>
</dbReference>
<dbReference type="GO" id="GO:0032700">
    <property type="term" value="P:negative regulation of interleukin-17 production"/>
    <property type="evidence" value="ECO:0007669"/>
    <property type="project" value="Ensembl"/>
</dbReference>
<dbReference type="GO" id="GO:0048662">
    <property type="term" value="P:negative regulation of smooth muscle cell proliferation"/>
    <property type="evidence" value="ECO:0007669"/>
    <property type="project" value="Ensembl"/>
</dbReference>
<dbReference type="GO" id="GO:1902004">
    <property type="term" value="P:positive regulation of amyloid-beta formation"/>
    <property type="evidence" value="ECO:0007669"/>
    <property type="project" value="Ensembl"/>
</dbReference>
<dbReference type="GO" id="GO:0010508">
    <property type="term" value="P:positive regulation of autophagy"/>
    <property type="evidence" value="ECO:0007669"/>
    <property type="project" value="Ensembl"/>
</dbReference>
<dbReference type="GO" id="GO:0032834">
    <property type="term" value="P:positive regulation of CD4-positive, CD25-positive, alpha-beta regulatory T cell differentiation involved in immune response"/>
    <property type="evidence" value="ECO:0007669"/>
    <property type="project" value="Ensembl"/>
</dbReference>
<dbReference type="GO" id="GO:0032722">
    <property type="term" value="P:positive regulation of chemokine production"/>
    <property type="evidence" value="ECO:0007669"/>
    <property type="project" value="Ensembl"/>
</dbReference>
<dbReference type="GO" id="GO:0010634">
    <property type="term" value="P:positive regulation of epithelial cell migration"/>
    <property type="evidence" value="ECO:0007669"/>
    <property type="project" value="Ensembl"/>
</dbReference>
<dbReference type="GO" id="GO:0060552">
    <property type="term" value="P:positive regulation of fructose 1,6-bisphosphate metabolic process"/>
    <property type="evidence" value="ECO:0007669"/>
    <property type="project" value="Ensembl"/>
</dbReference>
<dbReference type="GO" id="GO:0050729">
    <property type="term" value="P:positive regulation of inflammatory response"/>
    <property type="evidence" value="ECO:0007669"/>
    <property type="project" value="Ensembl"/>
</dbReference>
<dbReference type="GO" id="GO:0032735">
    <property type="term" value="P:positive regulation of interleukin-12 production"/>
    <property type="evidence" value="ECO:0007669"/>
    <property type="project" value="Ensembl"/>
</dbReference>
<dbReference type="GO" id="GO:0032747">
    <property type="term" value="P:positive regulation of interleukin-23 production"/>
    <property type="evidence" value="ECO:0007669"/>
    <property type="project" value="Ensembl"/>
</dbReference>
<dbReference type="GO" id="GO:0032755">
    <property type="term" value="P:positive regulation of interleukin-6 production"/>
    <property type="evidence" value="ECO:0007669"/>
    <property type="project" value="Ensembl"/>
</dbReference>
<dbReference type="GO" id="GO:0051044">
    <property type="term" value="P:positive regulation of membrane protein ectodomain proteolysis"/>
    <property type="evidence" value="ECO:0007669"/>
    <property type="project" value="Ensembl"/>
</dbReference>
<dbReference type="GO" id="GO:0050769">
    <property type="term" value="P:positive regulation of neurogenesis"/>
    <property type="evidence" value="ECO:0007669"/>
    <property type="project" value="Ensembl"/>
</dbReference>
<dbReference type="GO" id="GO:0045429">
    <property type="term" value="P:positive regulation of nitric oxide biosynthetic process"/>
    <property type="evidence" value="ECO:0007669"/>
    <property type="project" value="Ensembl"/>
</dbReference>
<dbReference type="GO" id="GO:0045672">
    <property type="term" value="P:positive regulation of osteoclast differentiation"/>
    <property type="evidence" value="ECO:0007669"/>
    <property type="project" value="Ensembl"/>
</dbReference>
<dbReference type="GO" id="GO:0042307">
    <property type="term" value="P:positive regulation of protein import into nucleus"/>
    <property type="evidence" value="ECO:0007669"/>
    <property type="project" value="Ensembl"/>
</dbReference>
<dbReference type="GO" id="GO:0031334">
    <property type="term" value="P:positive regulation of protein-containing complex assembly"/>
    <property type="evidence" value="ECO:0007669"/>
    <property type="project" value="Ensembl"/>
</dbReference>
<dbReference type="GO" id="GO:0034393">
    <property type="term" value="P:positive regulation of smooth muscle cell apoptotic process"/>
    <property type="evidence" value="ECO:0007669"/>
    <property type="project" value="Ensembl"/>
</dbReference>
<dbReference type="GO" id="GO:2000309">
    <property type="term" value="P:positive regulation of tumor necrosis factor (ligand) superfamily member 11 production"/>
    <property type="evidence" value="ECO:0007669"/>
    <property type="project" value="Ensembl"/>
</dbReference>
<dbReference type="GO" id="GO:0060557">
    <property type="term" value="P:positive regulation of vitamin D biosynthetic process"/>
    <property type="evidence" value="ECO:0007669"/>
    <property type="project" value="Ensembl"/>
</dbReference>
<dbReference type="GO" id="GO:0050796">
    <property type="term" value="P:regulation of insulin secretion"/>
    <property type="evidence" value="ECO:0007669"/>
    <property type="project" value="Ensembl"/>
</dbReference>
<dbReference type="GO" id="GO:0060333">
    <property type="term" value="P:type II interferon-mediated signaling pathway"/>
    <property type="evidence" value="ECO:0007669"/>
    <property type="project" value="Ensembl"/>
</dbReference>
<dbReference type="GO" id="GO:0038196">
    <property type="term" value="P:type III interferon-mediated signaling pathway"/>
    <property type="evidence" value="ECO:0007669"/>
    <property type="project" value="Ensembl"/>
</dbReference>
<dbReference type="FunFam" id="1.20.1250.10:FF:000007">
    <property type="entry name" value="Interferon gamma"/>
    <property type="match status" value="1"/>
</dbReference>
<dbReference type="Gene3D" id="1.20.1250.10">
    <property type="match status" value="1"/>
</dbReference>
<dbReference type="InterPro" id="IPR009079">
    <property type="entry name" value="4_helix_cytokine-like_core"/>
</dbReference>
<dbReference type="InterPro" id="IPR002069">
    <property type="entry name" value="Interferon_gamma"/>
</dbReference>
<dbReference type="PANTHER" id="PTHR11419">
    <property type="entry name" value="INTERFERON GAMMA"/>
    <property type="match status" value="1"/>
</dbReference>
<dbReference type="PANTHER" id="PTHR11419:SF0">
    <property type="entry name" value="INTERFERON GAMMA"/>
    <property type="match status" value="1"/>
</dbReference>
<dbReference type="Pfam" id="PF00714">
    <property type="entry name" value="IFN-gamma"/>
    <property type="match status" value="1"/>
</dbReference>
<dbReference type="PIRSF" id="PIRSF001936">
    <property type="entry name" value="IFN-gamma"/>
    <property type="match status" value="1"/>
</dbReference>
<dbReference type="SUPFAM" id="SSF47266">
    <property type="entry name" value="4-helical cytokines"/>
    <property type="match status" value="1"/>
</dbReference>
<reference key="1">
    <citation type="journal article" date="2006" name="Vet. Immunol. Immunopathol.">
        <title>Cloning of fox (Vulpes vulpes) IL2, IL6, IL10 and IFNgamma and analysis of their expression by quantitative RT-PCR in fox PBMC after in vitro stimulation by concanavalin A.</title>
        <authorList>
            <person name="Rolland-Turner M."/>
            <person name="Farre G."/>
            <person name="Boue F."/>
        </authorList>
    </citation>
    <scope>NUCLEOTIDE SEQUENCE [MRNA]</scope>
</reference>
<name>IFNG_VULVU</name>
<organism>
    <name type="scientific">Vulpes vulpes</name>
    <name type="common">Red fox</name>
    <dbReference type="NCBI Taxonomy" id="9627"/>
    <lineage>
        <taxon>Eukaryota</taxon>
        <taxon>Metazoa</taxon>
        <taxon>Chordata</taxon>
        <taxon>Craniata</taxon>
        <taxon>Vertebrata</taxon>
        <taxon>Euteleostomi</taxon>
        <taxon>Mammalia</taxon>
        <taxon>Eutheria</taxon>
        <taxon>Laurasiatheria</taxon>
        <taxon>Carnivora</taxon>
        <taxon>Caniformia</taxon>
        <taxon>Canidae</taxon>
        <taxon>Vulpes</taxon>
    </lineage>
</organism>
<accession>Q25BC0</accession>
<sequence length="166" mass="19395">MNYTSYILAFQLCVILCSSGCNCQAMFFKEIENLKEYFNASNPDVSDGGSLFVDILKKWREESDKTIIQSQIVSFYLKLFDNFKDNQIIQRSMDTIKEDMLGKFLNSSTSKREDFLKLIQIPVNDLQVQRKAINELIKVMNDLSPRSNLRKRKRSQNLFRGRRASK</sequence>
<keyword id="KW-0051">Antiviral defense</keyword>
<keyword id="KW-0202">Cytokine</keyword>
<keyword id="KW-0325">Glycoprotein</keyword>
<keyword id="KW-0341">Growth regulation</keyword>
<keyword id="KW-0873">Pyrrolidone carboxylic acid</keyword>
<keyword id="KW-1185">Reference proteome</keyword>
<keyword id="KW-0964">Secreted</keyword>
<keyword id="KW-0732">Signal</keyword>
<proteinExistence type="evidence at transcript level"/>
<feature type="signal peptide" evidence="1">
    <location>
        <begin position="1"/>
        <end position="23"/>
    </location>
</feature>
<feature type="chain" id="PRO_0000235174" description="Interferon gamma">
    <location>
        <begin position="24"/>
        <end position="166"/>
    </location>
</feature>
<feature type="modified residue" description="Pyrrolidone carboxylic acid" evidence="2">
    <location>
        <position position="24"/>
    </location>
</feature>
<feature type="glycosylation site" description="N-linked (GlcNAc...) asparagine" evidence="4">
    <location>
        <position position="39"/>
    </location>
</feature>
<feature type="glycosylation site" description="N-linked (GlcNAc...) asparagine" evidence="4">
    <location>
        <position position="106"/>
    </location>
</feature>
<comment type="function">
    <text evidence="2 3">Type II interferon produced by immune cells such as T-cells and NK cells that plays crucial roles in antimicrobial, antiviral, and antitumor responses by activating effector immune cells and enhancing antigen presentation. Primarily signals through the JAK-STAT pathway after interaction with its receptor IFNGR1 to affect gene regulation. Upon IFNG binding, IFNGR1 intracellular domain opens out to allow association of downstream signaling components JAK2, JAK1 and STAT1, leading to STAT1 activation, nuclear translocation and transcription of IFNG-regulated genes. Many of the induced genes are transcription factors such as IRF1 that are able to further drive regulation of a next wave of transcription. Plays a role in class I antigen presentation pathway by inducing a replacement of catalytic proteasome subunits with immunoproteasome subunits. In turn, increases the quantity, quality, and repertoire of peptides for class I MHC loading. Increases the efficiency of peptide generation also by inducing the expression of activator PA28 that associates with the proteasome and alters its proteolytic cleavage preference. Up-regulates as well MHC II complexes on the cell surface by promoting expression of several key molecules such as cathepsins B/CTSB, H/CTSH, and L/CTSL (By similarity). Participates in the regulation of hematopoietic stem cells during development and under homeostatic conditions by affecting their development, quiescence, and differentiation (By similarity).</text>
</comment>
<comment type="subunit">
    <text evidence="2">Homodimer. Interacts with IFNGR1 (via extracellular domain); this interaction promotes IFNGR1 dimerization.</text>
</comment>
<comment type="subcellular location">
    <subcellularLocation>
        <location evidence="2">Secreted</location>
    </subcellularLocation>
</comment>
<comment type="tissue specificity">
    <text>Released primarily from activated T lymphocytes.</text>
</comment>
<comment type="similarity">
    <text evidence="5">Belongs to the type II (or gamma) interferon family.</text>
</comment>